<evidence type="ECO:0000250" key="1">
    <source>
        <dbReference type="UniProtKB" id="P00362"/>
    </source>
</evidence>
<evidence type="ECO:0000250" key="2">
    <source>
        <dbReference type="UniProtKB" id="P54226"/>
    </source>
</evidence>
<evidence type="ECO:0000250" key="3">
    <source>
        <dbReference type="UniProtKB" id="P9WN83"/>
    </source>
</evidence>
<evidence type="ECO:0000305" key="4"/>
<feature type="chain" id="PRO_0000145669" description="Glyceraldehyde-3-phosphate dehydrogenase">
    <location>
        <begin position="1"/>
        <end position="339"/>
    </location>
</feature>
<feature type="active site" description="Nucleophile" evidence="1">
    <location>
        <position position="158"/>
    </location>
</feature>
<feature type="binding site" evidence="1">
    <location>
        <begin position="12"/>
        <end position="13"/>
    </location>
    <ligand>
        <name>NAD(+)</name>
        <dbReference type="ChEBI" id="CHEBI:57540"/>
    </ligand>
</feature>
<feature type="binding site" evidence="1">
    <location>
        <position position="39"/>
    </location>
    <ligand>
        <name>NAD(+)</name>
        <dbReference type="ChEBI" id="CHEBI:57540"/>
    </ligand>
</feature>
<feature type="binding site" evidence="1">
    <location>
        <position position="84"/>
    </location>
    <ligand>
        <name>NAD(+)</name>
        <dbReference type="ChEBI" id="CHEBI:57540"/>
    </ligand>
</feature>
<feature type="binding site" evidence="1">
    <location>
        <position position="127"/>
    </location>
    <ligand>
        <name>NAD(+)</name>
        <dbReference type="ChEBI" id="CHEBI:57540"/>
    </ligand>
</feature>
<feature type="binding site" evidence="1">
    <location>
        <begin position="157"/>
        <end position="159"/>
    </location>
    <ligand>
        <name>D-glyceraldehyde 3-phosphate</name>
        <dbReference type="ChEBI" id="CHEBI:59776"/>
    </ligand>
</feature>
<feature type="binding site" evidence="1">
    <location>
        <position position="188"/>
    </location>
    <ligand>
        <name>D-glyceraldehyde 3-phosphate</name>
        <dbReference type="ChEBI" id="CHEBI:59776"/>
    </ligand>
</feature>
<feature type="binding site" evidence="1">
    <location>
        <position position="203"/>
    </location>
    <ligand>
        <name>D-glyceraldehyde 3-phosphate</name>
        <dbReference type="ChEBI" id="CHEBI:59776"/>
    </ligand>
</feature>
<feature type="binding site" evidence="1">
    <location>
        <begin position="216"/>
        <end position="217"/>
    </location>
    <ligand>
        <name>D-glyceraldehyde 3-phosphate</name>
        <dbReference type="ChEBI" id="CHEBI:59776"/>
    </ligand>
</feature>
<feature type="binding site" evidence="1">
    <location>
        <position position="239"/>
    </location>
    <ligand>
        <name>D-glyceraldehyde 3-phosphate</name>
        <dbReference type="ChEBI" id="CHEBI:59776"/>
    </ligand>
</feature>
<feature type="binding site" evidence="1">
    <location>
        <position position="320"/>
    </location>
    <ligand>
        <name>NAD(+)</name>
        <dbReference type="ChEBI" id="CHEBI:57540"/>
    </ligand>
</feature>
<feature type="site" description="Activates thiol group during catalysis" evidence="1">
    <location>
        <position position="185"/>
    </location>
</feature>
<name>G3P_MYCLE</name>
<accession>P46713</accession>
<dbReference type="EC" id="1.2.1.12" evidence="3"/>
<dbReference type="EMBL" id="U00013">
    <property type="protein sequence ID" value="AAA17130.1"/>
    <property type="molecule type" value="Genomic_DNA"/>
</dbReference>
<dbReference type="EMBL" id="AL583919">
    <property type="protein sequence ID" value="CAC30078.1"/>
    <property type="molecule type" value="Genomic_DNA"/>
</dbReference>
<dbReference type="PIR" id="S72763">
    <property type="entry name" value="S72763"/>
</dbReference>
<dbReference type="RefSeq" id="NP_301482.1">
    <property type="nucleotide sequence ID" value="NC_002677.1"/>
</dbReference>
<dbReference type="RefSeq" id="WP_010907806.1">
    <property type="nucleotide sequence ID" value="NC_002677.1"/>
</dbReference>
<dbReference type="SMR" id="P46713"/>
<dbReference type="STRING" id="272631.gene:17574391"/>
<dbReference type="KEGG" id="mle:ML0570"/>
<dbReference type="PATRIC" id="fig|272631.5.peg.998"/>
<dbReference type="Leproma" id="ML0570"/>
<dbReference type="eggNOG" id="COG0057">
    <property type="taxonomic scope" value="Bacteria"/>
</dbReference>
<dbReference type="HOGENOM" id="CLU_030140_0_2_11"/>
<dbReference type="OrthoDB" id="9803304at2"/>
<dbReference type="UniPathway" id="UPA00109">
    <property type="reaction ID" value="UER00184"/>
</dbReference>
<dbReference type="Proteomes" id="UP000000806">
    <property type="component" value="Chromosome"/>
</dbReference>
<dbReference type="GO" id="GO:0005737">
    <property type="term" value="C:cytoplasm"/>
    <property type="evidence" value="ECO:0007669"/>
    <property type="project" value="UniProtKB-SubCell"/>
</dbReference>
<dbReference type="GO" id="GO:0004365">
    <property type="term" value="F:glyceraldehyde-3-phosphate dehydrogenase (NAD+) (phosphorylating) activity"/>
    <property type="evidence" value="ECO:0000250"/>
    <property type="project" value="UniProtKB"/>
</dbReference>
<dbReference type="GO" id="GO:0051287">
    <property type="term" value="F:NAD binding"/>
    <property type="evidence" value="ECO:0000250"/>
    <property type="project" value="UniProtKB"/>
</dbReference>
<dbReference type="GO" id="GO:0050661">
    <property type="term" value="F:NADP binding"/>
    <property type="evidence" value="ECO:0007669"/>
    <property type="project" value="InterPro"/>
</dbReference>
<dbReference type="GO" id="GO:0006006">
    <property type="term" value="P:glucose metabolic process"/>
    <property type="evidence" value="ECO:0007669"/>
    <property type="project" value="InterPro"/>
</dbReference>
<dbReference type="GO" id="GO:0006096">
    <property type="term" value="P:glycolytic process"/>
    <property type="evidence" value="ECO:0007669"/>
    <property type="project" value="UniProtKB-UniPathway"/>
</dbReference>
<dbReference type="CDD" id="cd18126">
    <property type="entry name" value="GAPDH_I_C"/>
    <property type="match status" value="1"/>
</dbReference>
<dbReference type="CDD" id="cd05214">
    <property type="entry name" value="GAPDH_I_N"/>
    <property type="match status" value="1"/>
</dbReference>
<dbReference type="FunFam" id="3.30.360.10:FF:000002">
    <property type="entry name" value="Glyceraldehyde-3-phosphate dehydrogenase"/>
    <property type="match status" value="1"/>
</dbReference>
<dbReference type="FunFam" id="3.40.50.720:FF:000001">
    <property type="entry name" value="Glyceraldehyde-3-phosphate dehydrogenase"/>
    <property type="match status" value="1"/>
</dbReference>
<dbReference type="Gene3D" id="3.30.360.10">
    <property type="entry name" value="Dihydrodipicolinate Reductase, domain 2"/>
    <property type="match status" value="1"/>
</dbReference>
<dbReference type="Gene3D" id="3.40.50.720">
    <property type="entry name" value="NAD(P)-binding Rossmann-like Domain"/>
    <property type="match status" value="1"/>
</dbReference>
<dbReference type="InterPro" id="IPR020831">
    <property type="entry name" value="GlycerAld/Erythrose_P_DH"/>
</dbReference>
<dbReference type="InterPro" id="IPR020830">
    <property type="entry name" value="GlycerAld_3-P_DH_AS"/>
</dbReference>
<dbReference type="InterPro" id="IPR020829">
    <property type="entry name" value="GlycerAld_3-P_DH_cat"/>
</dbReference>
<dbReference type="InterPro" id="IPR020828">
    <property type="entry name" value="GlycerAld_3-P_DH_NAD(P)-bd"/>
</dbReference>
<dbReference type="InterPro" id="IPR006424">
    <property type="entry name" value="Glyceraldehyde-3-P_DH_1"/>
</dbReference>
<dbReference type="InterPro" id="IPR036291">
    <property type="entry name" value="NAD(P)-bd_dom_sf"/>
</dbReference>
<dbReference type="NCBIfam" id="TIGR01534">
    <property type="entry name" value="GAPDH-I"/>
    <property type="match status" value="1"/>
</dbReference>
<dbReference type="PANTHER" id="PTHR43148">
    <property type="entry name" value="GLYCERALDEHYDE-3-PHOSPHATE DEHYDROGENASE 2"/>
    <property type="match status" value="1"/>
</dbReference>
<dbReference type="Pfam" id="PF02800">
    <property type="entry name" value="Gp_dh_C"/>
    <property type="match status" value="1"/>
</dbReference>
<dbReference type="Pfam" id="PF00044">
    <property type="entry name" value="Gp_dh_N"/>
    <property type="match status" value="1"/>
</dbReference>
<dbReference type="PIRSF" id="PIRSF000149">
    <property type="entry name" value="GAP_DH"/>
    <property type="match status" value="1"/>
</dbReference>
<dbReference type="PRINTS" id="PR00078">
    <property type="entry name" value="G3PDHDRGNASE"/>
</dbReference>
<dbReference type="SMART" id="SM00846">
    <property type="entry name" value="Gp_dh_N"/>
    <property type="match status" value="1"/>
</dbReference>
<dbReference type="SUPFAM" id="SSF55347">
    <property type="entry name" value="Glyceraldehyde-3-phosphate dehydrogenase-like, C-terminal domain"/>
    <property type="match status" value="1"/>
</dbReference>
<dbReference type="SUPFAM" id="SSF51735">
    <property type="entry name" value="NAD(P)-binding Rossmann-fold domains"/>
    <property type="match status" value="1"/>
</dbReference>
<dbReference type="PROSITE" id="PS00071">
    <property type="entry name" value="GAPDH"/>
    <property type="match status" value="1"/>
</dbReference>
<proteinExistence type="inferred from homology"/>
<sequence>MTVRVGINGFGRIGRNFYRALLAQQEHGIADVQVVAINDITDNSTLAYLLKFDSILGRLPHDVSLEEEDTIVVGSEKIKALAVREGPAALPWHAFGVDVVVESTGLFTNAAKAKGHLEAGAKKVIVSAPATDPDITIVFGVNDDKYDGSQNIISNASCTTNCLAPLAKVLHDQFGIVKGLMTTVHAYTQDQNLQDGPHSDLRRARAAALNVVPTSTGAAKAIGLVMPELKGKLDGYALRVPIPTGSVTDLTADLSKCVSVNEINAVFQDAAEGRLKGILKYVDAPIVSSDIVTDPHSSIFDSGLTKVIASQAKVVSWYDNEWGYSNRLVDLVGLVGKSL</sequence>
<organism>
    <name type="scientific">Mycobacterium leprae (strain TN)</name>
    <dbReference type="NCBI Taxonomy" id="272631"/>
    <lineage>
        <taxon>Bacteria</taxon>
        <taxon>Bacillati</taxon>
        <taxon>Actinomycetota</taxon>
        <taxon>Actinomycetes</taxon>
        <taxon>Mycobacteriales</taxon>
        <taxon>Mycobacteriaceae</taxon>
        <taxon>Mycobacterium</taxon>
    </lineage>
</organism>
<protein>
    <recommendedName>
        <fullName evidence="3">Glyceraldehyde-3-phosphate dehydrogenase</fullName>
        <shortName evidence="3">GAPDH</shortName>
        <ecNumber evidence="3">1.2.1.12</ecNumber>
    </recommendedName>
    <alternativeName>
        <fullName evidence="3">NAD-dependent glyceraldehyde-3-phosphate dehydrogenase</fullName>
    </alternativeName>
</protein>
<gene>
    <name type="primary">gapA</name>
    <name type="synonym">gap</name>
    <name type="ordered locus">ML0570</name>
    <name type="ORF">B1496_C3_199</name>
</gene>
<comment type="function">
    <text evidence="3">Catalyzes the oxidative phosphorylation of glyceraldehyde 3-phosphate (G3P) to 1,3-bisphosphoglycerate (BPG) using the cofactor NAD. The first reaction step involves the formation of a hemiacetal intermediate between G3P and a cysteine residue, and this hemiacetal intermediate is then oxidized to a thioester, with concomitant reduction of NAD to NADH. The reduced NADH is then exchanged with the second NAD, and the thioester is attacked by a nucleophilic inorganic phosphate to produce BPG.</text>
</comment>
<comment type="catalytic activity">
    <reaction evidence="3">
        <text>D-glyceraldehyde 3-phosphate + phosphate + NAD(+) = (2R)-3-phospho-glyceroyl phosphate + NADH + H(+)</text>
        <dbReference type="Rhea" id="RHEA:10300"/>
        <dbReference type="ChEBI" id="CHEBI:15378"/>
        <dbReference type="ChEBI" id="CHEBI:43474"/>
        <dbReference type="ChEBI" id="CHEBI:57540"/>
        <dbReference type="ChEBI" id="CHEBI:57604"/>
        <dbReference type="ChEBI" id="CHEBI:57945"/>
        <dbReference type="ChEBI" id="CHEBI:59776"/>
        <dbReference type="EC" id="1.2.1.12"/>
    </reaction>
</comment>
<comment type="pathway">
    <text evidence="4">Carbohydrate degradation; glycolysis; pyruvate from D-glyceraldehyde 3-phosphate: step 1/5.</text>
</comment>
<comment type="subunit">
    <text evidence="2">Homotetramer.</text>
</comment>
<comment type="subcellular location">
    <subcellularLocation>
        <location evidence="4">Cytoplasm</location>
    </subcellularLocation>
</comment>
<comment type="similarity">
    <text evidence="4">Belongs to the glyceraldehyde-3-phosphate dehydrogenase family.</text>
</comment>
<keyword id="KW-0963">Cytoplasm</keyword>
<keyword id="KW-0324">Glycolysis</keyword>
<keyword id="KW-0520">NAD</keyword>
<keyword id="KW-0547">Nucleotide-binding</keyword>
<keyword id="KW-0560">Oxidoreductase</keyword>
<keyword id="KW-1185">Reference proteome</keyword>
<reference key="1">
    <citation type="submission" date="1994-03" db="EMBL/GenBank/DDBJ databases">
        <authorList>
            <person name="Smith D.R."/>
            <person name="Robison K."/>
        </authorList>
    </citation>
    <scope>NUCLEOTIDE SEQUENCE [GENOMIC DNA]</scope>
</reference>
<reference key="2">
    <citation type="journal article" date="2001" name="Nature">
        <title>Massive gene decay in the leprosy bacillus.</title>
        <authorList>
            <person name="Cole S.T."/>
            <person name="Eiglmeier K."/>
            <person name="Parkhill J."/>
            <person name="James K.D."/>
            <person name="Thomson N.R."/>
            <person name="Wheeler P.R."/>
            <person name="Honore N."/>
            <person name="Garnier T."/>
            <person name="Churcher C.M."/>
            <person name="Harris D.E."/>
            <person name="Mungall K.L."/>
            <person name="Basham D."/>
            <person name="Brown D."/>
            <person name="Chillingworth T."/>
            <person name="Connor R."/>
            <person name="Davies R.M."/>
            <person name="Devlin K."/>
            <person name="Duthoy S."/>
            <person name="Feltwell T."/>
            <person name="Fraser A."/>
            <person name="Hamlin N."/>
            <person name="Holroyd S."/>
            <person name="Hornsby T."/>
            <person name="Jagels K."/>
            <person name="Lacroix C."/>
            <person name="Maclean J."/>
            <person name="Moule S."/>
            <person name="Murphy L.D."/>
            <person name="Oliver K."/>
            <person name="Quail M.A."/>
            <person name="Rajandream M.A."/>
            <person name="Rutherford K.M."/>
            <person name="Rutter S."/>
            <person name="Seeger K."/>
            <person name="Simon S."/>
            <person name="Simmonds M."/>
            <person name="Skelton J."/>
            <person name="Squares R."/>
            <person name="Squares S."/>
            <person name="Stevens K."/>
            <person name="Taylor K."/>
            <person name="Whitehead S."/>
            <person name="Woodward J.R."/>
            <person name="Barrell B.G."/>
        </authorList>
    </citation>
    <scope>NUCLEOTIDE SEQUENCE [LARGE SCALE GENOMIC DNA]</scope>
    <source>
        <strain>TN</strain>
    </source>
</reference>